<evidence type="ECO:0000250" key="1">
    <source>
        <dbReference type="UniProtKB" id="P0A924"/>
    </source>
</evidence>
<evidence type="ECO:0000255" key="2"/>
<evidence type="ECO:0000269" key="3">
    <source>
    </source>
</evidence>
<evidence type="ECO:0000305" key="4"/>
<evidence type="ECO:0000305" key="5">
    <source>
    </source>
</evidence>
<gene>
    <name type="primary">LPPD</name>
    <name type="synonym">SPP1</name>
    <name type="ordered locus">At3g58490</name>
    <name type="ORF">F14P22.80</name>
</gene>
<dbReference type="EC" id="3.1.3.-"/>
<dbReference type="EMBL" id="AB239190">
    <property type="protein sequence ID" value="BAE46997.1"/>
    <property type="molecule type" value="mRNA"/>
</dbReference>
<dbReference type="EMBL" id="AL137082">
    <property type="protein sequence ID" value="CAB68187.1"/>
    <property type="molecule type" value="Genomic_DNA"/>
</dbReference>
<dbReference type="EMBL" id="CP002686">
    <property type="protein sequence ID" value="AEE79788.1"/>
    <property type="molecule type" value="Genomic_DNA"/>
</dbReference>
<dbReference type="PIR" id="T45669">
    <property type="entry name" value="T45669"/>
</dbReference>
<dbReference type="RefSeq" id="NP_191408.1">
    <molecule id="Q9M2G7-1"/>
    <property type="nucleotide sequence ID" value="NM_115711.4"/>
</dbReference>
<dbReference type="SMR" id="Q9M2G7"/>
<dbReference type="FunCoup" id="Q9M2G7">
    <property type="interactions" value="1184"/>
</dbReference>
<dbReference type="STRING" id="3702.Q9M2G7"/>
<dbReference type="GlyGen" id="Q9M2G7">
    <property type="glycosylation" value="1 site"/>
</dbReference>
<dbReference type="PaxDb" id="3702-AT3G58490.1"/>
<dbReference type="ProteomicsDB" id="238424">
    <molecule id="Q9M2G7-1"/>
</dbReference>
<dbReference type="EnsemblPlants" id="AT3G58490.1">
    <molecule id="Q9M2G7-1"/>
    <property type="protein sequence ID" value="AT3G58490.1"/>
    <property type="gene ID" value="AT3G58490"/>
</dbReference>
<dbReference type="GeneID" id="825018"/>
<dbReference type="Gramene" id="AT3G58490.1">
    <molecule id="Q9M2G7-1"/>
    <property type="protein sequence ID" value="AT3G58490.1"/>
    <property type="gene ID" value="AT3G58490"/>
</dbReference>
<dbReference type="KEGG" id="ath:AT3G58490"/>
<dbReference type="Araport" id="AT3G58490"/>
<dbReference type="TAIR" id="AT3G58490">
    <property type="gene designation" value="SPP1"/>
</dbReference>
<dbReference type="eggNOG" id="KOG2822">
    <property type="taxonomic scope" value="Eukaryota"/>
</dbReference>
<dbReference type="HOGENOM" id="CLU_043042_0_0_1"/>
<dbReference type="InParanoid" id="Q9M2G7"/>
<dbReference type="PhylomeDB" id="Q9M2G7"/>
<dbReference type="BioCyc" id="ARA:AT3G58490-MONOMER"/>
<dbReference type="PRO" id="PR:Q9M2G7"/>
<dbReference type="Proteomes" id="UP000006548">
    <property type="component" value="Chromosome 3"/>
</dbReference>
<dbReference type="ExpressionAtlas" id="Q9M2G7">
    <property type="expression patterns" value="baseline and differential"/>
</dbReference>
<dbReference type="GO" id="GO:0005789">
    <property type="term" value="C:endoplasmic reticulum membrane"/>
    <property type="evidence" value="ECO:0000314"/>
    <property type="project" value="TAIR"/>
</dbReference>
<dbReference type="GO" id="GO:0016787">
    <property type="term" value="F:hydrolase activity"/>
    <property type="evidence" value="ECO:0007669"/>
    <property type="project" value="UniProtKB-KW"/>
</dbReference>
<dbReference type="GO" id="GO:0008117">
    <property type="term" value="F:sphinganine-1-phosphate aldolase activity"/>
    <property type="evidence" value="ECO:0000314"/>
    <property type="project" value="TAIR"/>
</dbReference>
<dbReference type="GO" id="GO:0009737">
    <property type="term" value="P:response to abscisic acid"/>
    <property type="evidence" value="ECO:0000315"/>
    <property type="project" value="TAIR"/>
</dbReference>
<dbReference type="GO" id="GO:0006665">
    <property type="term" value="P:sphingolipid metabolic process"/>
    <property type="evidence" value="ECO:0000314"/>
    <property type="project" value="TAIR"/>
</dbReference>
<dbReference type="GO" id="GO:0090332">
    <property type="term" value="P:stomatal closure"/>
    <property type="evidence" value="ECO:0000315"/>
    <property type="project" value="TAIR"/>
</dbReference>
<dbReference type="CDD" id="cd03388">
    <property type="entry name" value="PAP2_SPPase1"/>
    <property type="match status" value="1"/>
</dbReference>
<dbReference type="FunFam" id="1.20.144.10:FF:000070">
    <property type="entry name" value="Lipid phosphate phosphatase delta"/>
    <property type="match status" value="1"/>
</dbReference>
<dbReference type="Gene3D" id="1.20.144.10">
    <property type="entry name" value="Phosphatidic acid phosphatase type 2/haloperoxidase"/>
    <property type="match status" value="1"/>
</dbReference>
<dbReference type="InterPro" id="IPR036938">
    <property type="entry name" value="P_Acid_Pase_2/haloperoxi_sf"/>
</dbReference>
<dbReference type="InterPro" id="IPR000326">
    <property type="entry name" value="P_Acid_Pase_2/haloperoxidase"/>
</dbReference>
<dbReference type="PANTHER" id="PTHR14969:SF28">
    <property type="entry name" value="DIHYDROSPHINGOSINE 1-PHOSPHATE PHOSPHATASE LCB3-RELATED"/>
    <property type="match status" value="1"/>
</dbReference>
<dbReference type="PANTHER" id="PTHR14969">
    <property type="entry name" value="SPHINGOSINE-1-PHOSPHATE PHOSPHOHYDROLASE"/>
    <property type="match status" value="1"/>
</dbReference>
<dbReference type="Pfam" id="PF01569">
    <property type="entry name" value="PAP2"/>
    <property type="match status" value="1"/>
</dbReference>
<dbReference type="SMART" id="SM00014">
    <property type="entry name" value="acidPPc"/>
    <property type="match status" value="1"/>
</dbReference>
<dbReference type="SUPFAM" id="SSF48317">
    <property type="entry name" value="Acid phosphatase/Vanadium-dependent haloperoxidase"/>
    <property type="match status" value="1"/>
</dbReference>
<reference key="1">
    <citation type="submission" date="2005-10" db="EMBL/GenBank/DDBJ databases">
        <title>Arabidopsis thaliana AtSPP1 mRNA for sphingosine-1-phosphate phosphatase.</title>
        <authorList>
            <person name="Nakagawa N."/>
            <person name="Imai H."/>
        </authorList>
    </citation>
    <scope>NUCLEOTIDE SEQUENCE [MRNA]</scope>
</reference>
<reference key="2">
    <citation type="journal article" date="2000" name="Nature">
        <title>Sequence and analysis of chromosome 3 of the plant Arabidopsis thaliana.</title>
        <authorList>
            <person name="Salanoubat M."/>
            <person name="Lemcke K."/>
            <person name="Rieger M."/>
            <person name="Ansorge W."/>
            <person name="Unseld M."/>
            <person name="Fartmann B."/>
            <person name="Valle G."/>
            <person name="Bloecker H."/>
            <person name="Perez-Alonso M."/>
            <person name="Obermaier B."/>
            <person name="Delseny M."/>
            <person name="Boutry M."/>
            <person name="Grivell L.A."/>
            <person name="Mache R."/>
            <person name="Puigdomenech P."/>
            <person name="De Simone V."/>
            <person name="Choisne N."/>
            <person name="Artiguenave F."/>
            <person name="Robert C."/>
            <person name="Brottier P."/>
            <person name="Wincker P."/>
            <person name="Cattolico L."/>
            <person name="Weissenbach J."/>
            <person name="Saurin W."/>
            <person name="Quetier F."/>
            <person name="Schaefer M."/>
            <person name="Mueller-Auer S."/>
            <person name="Gabel C."/>
            <person name="Fuchs M."/>
            <person name="Benes V."/>
            <person name="Wurmbach E."/>
            <person name="Drzonek H."/>
            <person name="Erfle H."/>
            <person name="Jordan N."/>
            <person name="Bangert S."/>
            <person name="Wiedelmann R."/>
            <person name="Kranz H."/>
            <person name="Voss H."/>
            <person name="Holland R."/>
            <person name="Brandt P."/>
            <person name="Nyakatura G."/>
            <person name="Vezzi A."/>
            <person name="D'Angelo M."/>
            <person name="Pallavicini A."/>
            <person name="Toppo S."/>
            <person name="Simionati B."/>
            <person name="Conrad A."/>
            <person name="Hornischer K."/>
            <person name="Kauer G."/>
            <person name="Loehnert T.-H."/>
            <person name="Nordsiek G."/>
            <person name="Reichelt J."/>
            <person name="Scharfe M."/>
            <person name="Schoen O."/>
            <person name="Bargues M."/>
            <person name="Terol J."/>
            <person name="Climent J."/>
            <person name="Navarro P."/>
            <person name="Collado C."/>
            <person name="Perez-Perez A."/>
            <person name="Ottenwaelder B."/>
            <person name="Duchemin D."/>
            <person name="Cooke R."/>
            <person name="Laudie M."/>
            <person name="Berger-Llauro C."/>
            <person name="Purnelle B."/>
            <person name="Masuy D."/>
            <person name="de Haan M."/>
            <person name="Maarse A.C."/>
            <person name="Alcaraz J.-P."/>
            <person name="Cottet A."/>
            <person name="Casacuberta E."/>
            <person name="Monfort A."/>
            <person name="Argiriou A."/>
            <person name="Flores M."/>
            <person name="Liguori R."/>
            <person name="Vitale D."/>
            <person name="Mannhaupt G."/>
            <person name="Haase D."/>
            <person name="Schoof H."/>
            <person name="Rudd S."/>
            <person name="Zaccaria P."/>
            <person name="Mewes H.-W."/>
            <person name="Mayer K.F.X."/>
            <person name="Kaul S."/>
            <person name="Town C.D."/>
            <person name="Koo H.L."/>
            <person name="Tallon L.J."/>
            <person name="Jenkins J."/>
            <person name="Rooney T."/>
            <person name="Rizzo M."/>
            <person name="Walts A."/>
            <person name="Utterback T."/>
            <person name="Fujii C.Y."/>
            <person name="Shea T.P."/>
            <person name="Creasy T.H."/>
            <person name="Haas B."/>
            <person name="Maiti R."/>
            <person name="Wu D."/>
            <person name="Peterson J."/>
            <person name="Van Aken S."/>
            <person name="Pai G."/>
            <person name="Militscher J."/>
            <person name="Sellers P."/>
            <person name="Gill J.E."/>
            <person name="Feldblyum T.V."/>
            <person name="Preuss D."/>
            <person name="Lin X."/>
            <person name="Nierman W.C."/>
            <person name="Salzberg S.L."/>
            <person name="White O."/>
            <person name="Venter J.C."/>
            <person name="Fraser C.M."/>
            <person name="Kaneko T."/>
            <person name="Nakamura Y."/>
            <person name="Sato S."/>
            <person name="Kato T."/>
            <person name="Asamizu E."/>
            <person name="Sasamoto S."/>
            <person name="Kimura T."/>
            <person name="Idesawa K."/>
            <person name="Kawashima K."/>
            <person name="Kishida Y."/>
            <person name="Kiyokawa C."/>
            <person name="Kohara M."/>
            <person name="Matsumoto M."/>
            <person name="Matsuno A."/>
            <person name="Muraki A."/>
            <person name="Nakayama S."/>
            <person name="Nakazaki N."/>
            <person name="Shinpo S."/>
            <person name="Takeuchi C."/>
            <person name="Wada T."/>
            <person name="Watanabe A."/>
            <person name="Yamada M."/>
            <person name="Yasuda M."/>
            <person name="Tabata S."/>
        </authorList>
    </citation>
    <scope>NUCLEOTIDE SEQUENCE [LARGE SCALE GENOMIC DNA]</scope>
    <source>
        <strain>cv. Columbia</strain>
    </source>
</reference>
<reference key="3">
    <citation type="journal article" date="2017" name="Plant J.">
        <title>Araport11: a complete reannotation of the Arabidopsis thaliana reference genome.</title>
        <authorList>
            <person name="Cheng C.Y."/>
            <person name="Krishnakumar V."/>
            <person name="Chan A.P."/>
            <person name="Thibaud-Nissen F."/>
            <person name="Schobel S."/>
            <person name="Town C.D."/>
        </authorList>
    </citation>
    <scope>GENOME REANNOTATION</scope>
    <source>
        <strain>cv. Columbia</strain>
    </source>
</reference>
<reference key="4">
    <citation type="journal article" date="2012" name="J. Plant Res.">
        <title>Degradation of long-chain base 1-phosphate (LCBP) in Arabidopsis: functional characterization of LCBP phosphatase involved in the dehydration stress response.</title>
        <authorList>
            <person name="Nakagawa N."/>
            <person name="Kato M."/>
            <person name="Takahashi Y."/>
            <person name="Shimazaki K."/>
            <person name="Tamura K."/>
            <person name="Tokuji Y."/>
            <person name="Kihara A."/>
            <person name="Imai H."/>
        </authorList>
    </citation>
    <scope>FUNCTION</scope>
    <scope>SUBCELLULAR LOCATION</scope>
    <scope>DISRUPTION PHENOTYPE</scope>
</reference>
<sequence>MKKILERSMEGSGTWQGLVLVGIVTWICASSYLKFTHKFRSLLQPWVARQVVGGVPLILRIQKCQNGVLDAFFSGLSCVVSVPFYTAFLPLLFWSGHGRLARQMTLLIAFCDYLGNCIKDVVSAPRPSCPPVRRITATKDEEDNAMEYGLPSSHTLNTVCLSGYLLHYVLSSLEYESVSIQYYGFALACLLVALIAFGRVYLGMHSVVDIVSGLAIGVLILGLWLTVNEKLDDFITSKQNVSSFWTALSFLLLFAYPTPEHPTPSYEYHTAFNGVTLGIVTGVQQTYSQFHHEAAPRIFSPELPISSYLGRVMVGIPTILLVKFCSKSLAKWTLPMVSNALGIPIRSSMYIPKLKGYASGKKTDEPKNSVGYLQKLCEFLSHDSFDIDTGIRFFQYAGLAWSVVDLVPSLFSYVNL</sequence>
<proteinExistence type="evidence at transcript level"/>
<keyword id="KW-0025">Alternative splicing</keyword>
<keyword id="KW-0256">Endoplasmic reticulum</keyword>
<keyword id="KW-0378">Hydrolase</keyword>
<keyword id="KW-0443">Lipid metabolism</keyword>
<keyword id="KW-0472">Membrane</keyword>
<keyword id="KW-1185">Reference proteome</keyword>
<keyword id="KW-0746">Sphingolipid metabolism</keyword>
<keyword id="KW-0346">Stress response</keyword>
<keyword id="KW-0812">Transmembrane</keyword>
<keyword id="KW-1133">Transmembrane helix</keyword>
<organism>
    <name type="scientific">Arabidopsis thaliana</name>
    <name type="common">Mouse-ear cress</name>
    <dbReference type="NCBI Taxonomy" id="3702"/>
    <lineage>
        <taxon>Eukaryota</taxon>
        <taxon>Viridiplantae</taxon>
        <taxon>Streptophyta</taxon>
        <taxon>Embryophyta</taxon>
        <taxon>Tracheophyta</taxon>
        <taxon>Spermatophyta</taxon>
        <taxon>Magnoliopsida</taxon>
        <taxon>eudicotyledons</taxon>
        <taxon>Gunneridae</taxon>
        <taxon>Pentapetalae</taxon>
        <taxon>rosids</taxon>
        <taxon>malvids</taxon>
        <taxon>Brassicales</taxon>
        <taxon>Brassicaceae</taxon>
        <taxon>Camelineae</taxon>
        <taxon>Arabidopsis</taxon>
    </lineage>
</organism>
<accession>Q9M2G7</accession>
<name>LPPD_ARATH</name>
<comment type="function">
    <text evidence="3">Functions as a sphingoid long-chain base phosphate (LCBP) phosphatase. May play a role in the regulation of LCBP levels and be involved in stomatal responses through LCBP-mediated ABA signaling.</text>
</comment>
<comment type="subcellular location">
    <subcellularLocation>
        <location evidence="5">Endoplasmic reticulum membrane</location>
        <topology evidence="5">Multi-pass membrane protein</topology>
    </subcellularLocation>
</comment>
<comment type="alternative products">
    <event type="alternative splicing"/>
    <isoform>
        <id>Q9M2G7-1</id>
        <name>1</name>
        <sequence type="displayed"/>
    </isoform>
    <text>A number of isoforms are produced. According to EST sequences.</text>
</comment>
<comment type="disruption phenotype">
    <text evidence="3">No visible phenotype under normal growth conditions, but mutant plants show increased sensitivity to ABA in stomatal closure and decreased sensitivity to ABA-induced inhibition of primary root growth.</text>
</comment>
<comment type="similarity">
    <text evidence="4">Belongs to the type 2 lipid phosphate phosphatase family.</text>
</comment>
<protein>
    <recommendedName>
        <fullName>Lipid phosphate phosphatase delta</fullName>
        <shortName>AtLPPD</shortName>
        <ecNumber>3.1.3.-</ecNumber>
    </recommendedName>
    <alternativeName>
        <fullName>Phosphatidic acid phosphatase delta</fullName>
    </alternativeName>
    <alternativeName>
        <fullName>Sphingoid phosphate phosphatase 1</fullName>
        <shortName>AtSSP1</shortName>
    </alternativeName>
    <alternativeName>
        <fullName>Sphingosine-1-phosphate phosphatase</fullName>
        <shortName>AtSPPASE</shortName>
    </alternativeName>
</protein>
<feature type="chain" id="PRO_0000425224" description="Lipid phosphate phosphatase delta">
    <location>
        <begin position="1"/>
        <end position="416"/>
    </location>
</feature>
<feature type="transmembrane region" description="Helical" evidence="2">
    <location>
        <begin position="72"/>
        <end position="92"/>
    </location>
</feature>
<feature type="transmembrane region" description="Helical" evidence="2">
    <location>
        <begin position="104"/>
        <end position="124"/>
    </location>
</feature>
<feature type="transmembrane region" description="Helical" evidence="2">
    <location>
        <begin position="178"/>
        <end position="198"/>
    </location>
</feature>
<feature type="transmembrane region" description="Helical" evidence="2">
    <location>
        <begin position="207"/>
        <end position="227"/>
    </location>
</feature>
<feature type="transmembrane region" description="Helical" evidence="2">
    <location>
        <begin position="241"/>
        <end position="261"/>
    </location>
</feature>
<feature type="transmembrane region" description="Helical" evidence="2">
    <location>
        <begin position="266"/>
        <end position="286"/>
    </location>
</feature>
<feature type="transmembrane region" description="Helical" evidence="2">
    <location>
        <begin position="302"/>
        <end position="322"/>
    </location>
</feature>
<feature type="transmembrane region" description="Helical" evidence="2">
    <location>
        <begin position="393"/>
        <end position="413"/>
    </location>
</feature>
<feature type="region of interest" description="Phosphatase sequence motif I" evidence="4">
    <location>
        <begin position="119"/>
        <end position="127"/>
    </location>
</feature>
<feature type="region of interest" description="Phosphatase sequence motif II" evidence="4">
    <location>
        <begin position="151"/>
        <end position="154"/>
    </location>
</feature>
<feature type="region of interest" description="Phosphatase sequence motif III" evidence="4">
    <location>
        <begin position="198"/>
        <end position="209"/>
    </location>
</feature>
<feature type="active site" description="Proton donor" evidence="1">
    <location>
        <position position="154"/>
    </location>
</feature>
<feature type="active site" description="Nucleophile" evidence="1">
    <location>
        <position position="205"/>
    </location>
</feature>
<feature type="site" description="Stabilizes the active site histidine for nucleophilic attack" evidence="1">
    <location>
        <position position="209"/>
    </location>
</feature>